<feature type="chain" id="PRO_0000364427" description="S-adenosylmethionine decarboxylase beta chain" evidence="1">
    <location>
        <begin position="1"/>
        <end position="111"/>
    </location>
</feature>
<feature type="chain" id="PRO_0000364428" description="S-adenosylmethionine decarboxylase alpha chain" evidence="1">
    <location>
        <begin position="112"/>
        <end position="264"/>
    </location>
</feature>
<feature type="active site" description="Schiff-base intermediate with substrate; via pyruvic acid" evidence="1">
    <location>
        <position position="112"/>
    </location>
</feature>
<feature type="active site" description="Proton acceptor; for processing activity" evidence="1">
    <location>
        <position position="117"/>
    </location>
</feature>
<feature type="active site" description="Proton donor; for catalytic activity" evidence="1">
    <location>
        <position position="140"/>
    </location>
</feature>
<feature type="site" description="Cleavage (non-hydrolytic); by autolysis" evidence="1">
    <location>
        <begin position="111"/>
        <end position="112"/>
    </location>
</feature>
<feature type="modified residue" description="Pyruvic acid (Ser); by autocatalysis" evidence="1">
    <location>
        <position position="112"/>
    </location>
</feature>
<evidence type="ECO:0000255" key="1">
    <source>
        <dbReference type="HAMAP-Rule" id="MF_00465"/>
    </source>
</evidence>
<dbReference type="EC" id="4.1.1.50" evidence="1"/>
<dbReference type="EMBL" id="CP000901">
    <property type="protein sequence ID" value="ABX87498.1"/>
    <property type="molecule type" value="Genomic_DNA"/>
</dbReference>
<dbReference type="RefSeq" id="WP_002209337.1">
    <property type="nucleotide sequence ID" value="NZ_CP009935.1"/>
</dbReference>
<dbReference type="SMR" id="A9R1H5"/>
<dbReference type="GeneID" id="57975297"/>
<dbReference type="KEGG" id="ypg:YpAngola_A1024"/>
<dbReference type="PATRIC" id="fig|349746.12.peg.1972"/>
<dbReference type="UniPathway" id="UPA00331">
    <property type="reaction ID" value="UER00451"/>
</dbReference>
<dbReference type="GO" id="GO:0005829">
    <property type="term" value="C:cytosol"/>
    <property type="evidence" value="ECO:0007669"/>
    <property type="project" value="TreeGrafter"/>
</dbReference>
<dbReference type="GO" id="GO:0004014">
    <property type="term" value="F:adenosylmethionine decarboxylase activity"/>
    <property type="evidence" value="ECO:0007669"/>
    <property type="project" value="UniProtKB-UniRule"/>
</dbReference>
<dbReference type="GO" id="GO:0008295">
    <property type="term" value="P:spermidine biosynthetic process"/>
    <property type="evidence" value="ECO:0007669"/>
    <property type="project" value="UniProtKB-UniRule"/>
</dbReference>
<dbReference type="FunFam" id="3.60.90.10:FF:000001">
    <property type="entry name" value="S-adenosylmethionine decarboxylase proenzyme"/>
    <property type="match status" value="1"/>
</dbReference>
<dbReference type="Gene3D" id="3.60.90.10">
    <property type="entry name" value="S-adenosylmethionine decarboxylase"/>
    <property type="match status" value="1"/>
</dbReference>
<dbReference type="HAMAP" id="MF_00465">
    <property type="entry name" value="AdoMetDC_2"/>
    <property type="match status" value="1"/>
</dbReference>
<dbReference type="InterPro" id="IPR003826">
    <property type="entry name" value="AdoMetDC_fam_prok"/>
</dbReference>
<dbReference type="InterPro" id="IPR009165">
    <property type="entry name" value="S-AdoMet_deCO2ase_bac"/>
</dbReference>
<dbReference type="InterPro" id="IPR016067">
    <property type="entry name" value="S-AdoMet_deCO2ase_core"/>
</dbReference>
<dbReference type="NCBIfam" id="TIGR03331">
    <property type="entry name" value="SAM_DCase_Eco"/>
    <property type="match status" value="1"/>
</dbReference>
<dbReference type="PANTHER" id="PTHR33866">
    <property type="entry name" value="S-ADENOSYLMETHIONINE DECARBOXYLASE PROENZYME"/>
    <property type="match status" value="1"/>
</dbReference>
<dbReference type="PANTHER" id="PTHR33866:SF1">
    <property type="entry name" value="S-ADENOSYLMETHIONINE DECARBOXYLASE PROENZYME"/>
    <property type="match status" value="1"/>
</dbReference>
<dbReference type="Pfam" id="PF02675">
    <property type="entry name" value="AdoMet_dc"/>
    <property type="match status" value="1"/>
</dbReference>
<dbReference type="PIRSF" id="PIRSF001356">
    <property type="entry name" value="SAM_decarboxylas"/>
    <property type="match status" value="1"/>
</dbReference>
<dbReference type="SUPFAM" id="SSF56276">
    <property type="entry name" value="S-adenosylmethionine decarboxylase"/>
    <property type="match status" value="1"/>
</dbReference>
<protein>
    <recommendedName>
        <fullName evidence="1">S-adenosylmethionine decarboxylase proenzyme</fullName>
        <shortName evidence="1">AdoMetDC</shortName>
        <shortName evidence="1">SAMDC</shortName>
        <ecNumber evidence="1">4.1.1.50</ecNumber>
    </recommendedName>
    <component>
        <recommendedName>
            <fullName evidence="1">S-adenosylmethionine decarboxylase beta chain</fullName>
        </recommendedName>
    </component>
    <component>
        <recommendedName>
            <fullName evidence="1">S-adenosylmethionine decarboxylase alpha chain</fullName>
        </recommendedName>
    </component>
</protein>
<gene>
    <name evidence="1" type="primary">speD</name>
    <name type="ordered locus">YpAngola_A1024</name>
</gene>
<name>SPED_YERPG</name>
<sequence length="264" mass="30293">MSKLKLHGFNNLTKSLSFCIYDICYAKTADDRDGYIAYIDEQYNANRLTEILSETCSIIGANILNIARQDYDPQGASVTILVSEEPVDPRDVDTSEHPGPLPSAVVAHLDKSHICVHTYPESHPEAGLCTFRADIEVSTCGVISPLKALNYLIHQLESDIVTMDYRVRGFTRDINGVKHFIDHKINSIQNFMSDDMKSLYHMMDVNVYQENIFHTKMMLKDFDLKHYLFNAKPEELSAEEKEQITRLLYKEMQEIYYGRNVPEV</sequence>
<comment type="function">
    <text evidence="1">Catalyzes the decarboxylation of S-adenosylmethionine to S-adenosylmethioninamine (dcAdoMet), the propylamine donor required for the synthesis of the polyamines spermine and spermidine from the diamine putrescine.</text>
</comment>
<comment type="catalytic activity">
    <reaction evidence="1">
        <text>S-adenosyl-L-methionine + H(+) = S-adenosyl 3-(methylsulfanyl)propylamine + CO2</text>
        <dbReference type="Rhea" id="RHEA:15981"/>
        <dbReference type="ChEBI" id="CHEBI:15378"/>
        <dbReference type="ChEBI" id="CHEBI:16526"/>
        <dbReference type="ChEBI" id="CHEBI:57443"/>
        <dbReference type="ChEBI" id="CHEBI:59789"/>
        <dbReference type="EC" id="4.1.1.50"/>
    </reaction>
</comment>
<comment type="cofactor">
    <cofactor evidence="1">
        <name>pyruvate</name>
        <dbReference type="ChEBI" id="CHEBI:15361"/>
    </cofactor>
    <text evidence="1">Binds 1 pyruvoyl group covalently per subunit.</text>
</comment>
<comment type="pathway">
    <text evidence="1">Amine and polyamine biosynthesis; S-adenosylmethioninamine biosynthesis; S-adenosylmethioninamine from S-adenosyl-L-methionine: step 1/1.</text>
</comment>
<comment type="subunit">
    <text evidence="1">Heterooctamer of four alpha and four beta chains arranged as a tetramer of alpha/beta heterodimers.</text>
</comment>
<comment type="PTM">
    <text evidence="1">Is synthesized initially as an inactive proenzyme. Formation of the active enzyme involves a self-maturation process in which the active site pyruvoyl group is generated from an internal serine residue via an autocatalytic post-translational modification. Two non-identical subunits are generated from the proenzyme in this reaction, and the pyruvate is formed at the N-terminus of the alpha chain, which is derived from the carboxyl end of the proenzyme. The post-translation cleavage follows an unusual pathway, termed non-hydrolytic serinolysis, in which the side chain hydroxyl group of the serine supplies its oxygen atom to form the C-terminus of the beta chain, while the remainder of the serine residue undergoes an oxidative deamination to produce ammonia and the pyruvoyl group blocking the N-terminus of the alpha chain.</text>
</comment>
<comment type="similarity">
    <text evidence="1">Belongs to the prokaryotic AdoMetDC family. Type 2 subfamily.</text>
</comment>
<proteinExistence type="inferred from homology"/>
<keyword id="KW-0068">Autocatalytic cleavage</keyword>
<keyword id="KW-0210">Decarboxylase</keyword>
<keyword id="KW-0456">Lyase</keyword>
<keyword id="KW-0620">Polyamine biosynthesis</keyword>
<keyword id="KW-0670">Pyruvate</keyword>
<keyword id="KW-0949">S-adenosyl-L-methionine</keyword>
<keyword id="KW-0704">Schiff base</keyword>
<keyword id="KW-0745">Spermidine biosynthesis</keyword>
<keyword id="KW-0865">Zymogen</keyword>
<accession>A9R1H5</accession>
<organism>
    <name type="scientific">Yersinia pestis bv. Antiqua (strain Angola)</name>
    <dbReference type="NCBI Taxonomy" id="349746"/>
    <lineage>
        <taxon>Bacteria</taxon>
        <taxon>Pseudomonadati</taxon>
        <taxon>Pseudomonadota</taxon>
        <taxon>Gammaproteobacteria</taxon>
        <taxon>Enterobacterales</taxon>
        <taxon>Yersiniaceae</taxon>
        <taxon>Yersinia</taxon>
    </lineage>
</organism>
<reference key="1">
    <citation type="journal article" date="2010" name="J. Bacteriol.">
        <title>Genome sequence of the deep-rooted Yersinia pestis strain Angola reveals new insights into the evolution and pangenome of the plague bacterium.</title>
        <authorList>
            <person name="Eppinger M."/>
            <person name="Worsham P.L."/>
            <person name="Nikolich M.P."/>
            <person name="Riley D.R."/>
            <person name="Sebastian Y."/>
            <person name="Mou S."/>
            <person name="Achtman M."/>
            <person name="Lindler L.E."/>
            <person name="Ravel J."/>
        </authorList>
    </citation>
    <scope>NUCLEOTIDE SEQUENCE [LARGE SCALE GENOMIC DNA]</scope>
    <source>
        <strain>Angola</strain>
    </source>
</reference>